<gene>
    <name type="ordered locus">CbuG_0433</name>
</gene>
<comment type="subcellular location">
    <subcellularLocation>
        <location evidence="1">Cell inner membrane</location>
        <topology evidence="1">Multi-pass membrane protein</topology>
    </subcellularLocation>
</comment>
<comment type="similarity">
    <text evidence="1">Belongs to the UPF0761 family.</text>
</comment>
<accession>B6J454</accession>
<organism>
    <name type="scientific">Coxiella burnetii (strain CbuG_Q212)</name>
    <name type="common">Coxiella burnetii (strain Q212)</name>
    <dbReference type="NCBI Taxonomy" id="434923"/>
    <lineage>
        <taxon>Bacteria</taxon>
        <taxon>Pseudomonadati</taxon>
        <taxon>Pseudomonadota</taxon>
        <taxon>Gammaproteobacteria</taxon>
        <taxon>Legionellales</taxon>
        <taxon>Coxiellaceae</taxon>
        <taxon>Coxiella</taxon>
    </lineage>
</organism>
<reference key="1">
    <citation type="journal article" date="2009" name="Infect. Immun.">
        <title>Comparative genomics reveal extensive transposon-mediated genomic plasticity and diversity among potential effector proteins within the genus Coxiella.</title>
        <authorList>
            <person name="Beare P.A."/>
            <person name="Unsworth N."/>
            <person name="Andoh M."/>
            <person name="Voth D.E."/>
            <person name="Omsland A."/>
            <person name="Gilk S.D."/>
            <person name="Williams K.P."/>
            <person name="Sobral B.W."/>
            <person name="Kupko J.J. III"/>
            <person name="Porcella S.F."/>
            <person name="Samuel J.E."/>
            <person name="Heinzen R.A."/>
        </authorList>
    </citation>
    <scope>NUCLEOTIDE SEQUENCE [LARGE SCALE GENOMIC DNA]</scope>
    <source>
        <strain>CbuG_Q212</strain>
    </source>
</reference>
<dbReference type="EMBL" id="CP001019">
    <property type="protein sequence ID" value="ACJ17861.1"/>
    <property type="molecule type" value="Genomic_DNA"/>
</dbReference>
<dbReference type="RefSeq" id="WP_005772112.1">
    <property type="nucleotide sequence ID" value="NC_011527.1"/>
</dbReference>
<dbReference type="KEGG" id="cbg:CbuG_0433"/>
<dbReference type="HOGENOM" id="CLU_032288_0_0_6"/>
<dbReference type="GO" id="GO:0005886">
    <property type="term" value="C:plasma membrane"/>
    <property type="evidence" value="ECO:0007669"/>
    <property type="project" value="UniProtKB-SubCell"/>
</dbReference>
<dbReference type="HAMAP" id="MF_00672">
    <property type="entry name" value="UPF0761"/>
    <property type="match status" value="1"/>
</dbReference>
<dbReference type="InterPro" id="IPR023679">
    <property type="entry name" value="UPF0761_bac"/>
</dbReference>
<dbReference type="InterPro" id="IPR017039">
    <property type="entry name" value="Virul_fac_BrkB"/>
</dbReference>
<dbReference type="NCBIfam" id="TIGR00765">
    <property type="entry name" value="yihY_not_rbn"/>
    <property type="match status" value="1"/>
</dbReference>
<dbReference type="PANTHER" id="PTHR30213">
    <property type="entry name" value="INNER MEMBRANE PROTEIN YHJD"/>
    <property type="match status" value="1"/>
</dbReference>
<dbReference type="PANTHER" id="PTHR30213:SF0">
    <property type="entry name" value="UPF0761 MEMBRANE PROTEIN YIHY"/>
    <property type="match status" value="1"/>
</dbReference>
<dbReference type="Pfam" id="PF03631">
    <property type="entry name" value="Virul_fac_BrkB"/>
    <property type="match status" value="1"/>
</dbReference>
<dbReference type="PIRSF" id="PIRSF035875">
    <property type="entry name" value="RNase_BN"/>
    <property type="match status" value="1"/>
</dbReference>
<feature type="chain" id="PRO_1000131545" description="UPF0761 membrane protein CbuG_0433">
    <location>
        <begin position="1"/>
        <end position="278"/>
    </location>
</feature>
<feature type="transmembrane region" description="Helical" evidence="1">
    <location>
        <begin position="38"/>
        <end position="58"/>
    </location>
</feature>
<feature type="transmembrane region" description="Helical" evidence="1">
    <location>
        <begin position="68"/>
        <end position="88"/>
    </location>
</feature>
<feature type="transmembrane region" description="Helical" evidence="1">
    <location>
        <begin position="92"/>
        <end position="112"/>
    </location>
</feature>
<feature type="transmembrane region" description="Helical" evidence="1">
    <location>
        <begin position="134"/>
        <end position="154"/>
    </location>
</feature>
<feature type="transmembrane region" description="Helical" evidence="1">
    <location>
        <begin position="177"/>
        <end position="197"/>
    </location>
</feature>
<feature type="transmembrane region" description="Helical" evidence="1">
    <location>
        <begin position="207"/>
        <end position="227"/>
    </location>
</feature>
<feature type="transmembrane region" description="Helical" evidence="1">
    <location>
        <begin position="244"/>
        <end position="264"/>
    </location>
</feature>
<evidence type="ECO:0000255" key="1">
    <source>
        <dbReference type="HAMAP-Rule" id="MF_00672"/>
    </source>
</evidence>
<name>Y433_COXB2</name>
<sequence length="278" mass="31422">MTIYRFFKRSAFTLAYIYRRFHEEGCAYRATALAYTTLLALVPLTIVAFTLLSFVPAFQGVGVRLQNLIWENFVPTSAGMVAAYLSQLTQNVTGLSIINIFFLGIVALLLMYNINRAFVAIWHTEHHFRLSLHFLIYFMVLLLSPFLLGAVMLLGTFLVQSPLVTDLIGWPYLGKGLLFVLPYVLIFITFTLFNWVLPSAKVKLSHAVIGGLVTTVLFELAKFAFTVYLKFFPTYRVIYGALSVIPIFLVWLYVSWTIILLGAVVSNVIACGIPEKYK</sequence>
<proteinExistence type="inferred from homology"/>
<keyword id="KW-0997">Cell inner membrane</keyword>
<keyword id="KW-1003">Cell membrane</keyword>
<keyword id="KW-0472">Membrane</keyword>
<keyword id="KW-0812">Transmembrane</keyword>
<keyword id="KW-1133">Transmembrane helix</keyword>
<protein>
    <recommendedName>
        <fullName evidence="1">UPF0761 membrane protein CbuG_0433</fullName>
    </recommendedName>
</protein>